<keyword id="KW-0064">Aspartyl protease</keyword>
<keyword id="KW-0229">DNA integration</keyword>
<keyword id="KW-0233">DNA recombination</keyword>
<keyword id="KW-0238">DNA-binding</keyword>
<keyword id="KW-0255">Endonuclease</keyword>
<keyword id="KW-0378">Hydrolase</keyword>
<keyword id="KW-0479">Metal-binding</keyword>
<keyword id="KW-0511">Multifunctional enzyme</keyword>
<keyword id="KW-0540">Nuclease</keyword>
<keyword id="KW-0546">Nucleotide metabolism</keyword>
<keyword id="KW-0548">Nucleotidyltransferase</keyword>
<keyword id="KW-0645">Protease</keyword>
<keyword id="KW-0695">RNA-directed DNA polymerase</keyword>
<keyword id="KW-0808">Transferase</keyword>
<keyword id="KW-1179">Viral genome integration</keyword>
<keyword id="KW-1160">Virus entry into host cell</keyword>
<keyword id="KW-0862">Zinc</keyword>
<keyword id="KW-0863">Zinc-finger</keyword>
<reference key="1">
    <citation type="journal article" date="1990" name="Virology">
        <title>Nucleotide sequence analysis of SA-OMVV, a visna-related ovine lentivirus: phylogenetic history of lentiviruses.</title>
        <authorList>
            <person name="Querat G."/>
            <person name="Audoly G."/>
            <person name="Sonigo P."/>
            <person name="Vigne R."/>
        </authorList>
    </citation>
    <scope>NUCLEOTIDE SEQUENCE [GENOMIC RNA]</scope>
</reference>
<gene>
    <name type="primary">pol</name>
</gene>
<dbReference type="EC" id="3.4.23.-"/>
<dbReference type="EC" id="2.7.7.49"/>
<dbReference type="EC" id="3.1.26.13"/>
<dbReference type="EC" id="3.1.13.2"/>
<dbReference type="EC" id="3.6.1.23"/>
<dbReference type="EC" id="2.7.7.-" evidence="2"/>
<dbReference type="EC" id="3.1.-.-" evidence="2"/>
<dbReference type="EMBL" id="M31646">
    <property type="protein sequence ID" value="AAA66812.1"/>
    <property type="molecule type" value="Genomic_RNA"/>
</dbReference>
<dbReference type="SMR" id="P16901"/>
<dbReference type="MEROPS" id="A02.006"/>
<dbReference type="GO" id="GO:0004190">
    <property type="term" value="F:aspartic-type endopeptidase activity"/>
    <property type="evidence" value="ECO:0007669"/>
    <property type="project" value="UniProtKB-KW"/>
</dbReference>
<dbReference type="GO" id="GO:0003677">
    <property type="term" value="F:DNA binding"/>
    <property type="evidence" value="ECO:0007669"/>
    <property type="project" value="UniProtKB-KW"/>
</dbReference>
<dbReference type="GO" id="GO:0004170">
    <property type="term" value="F:dUTP diphosphatase activity"/>
    <property type="evidence" value="ECO:0007669"/>
    <property type="project" value="UniProtKB-EC"/>
</dbReference>
<dbReference type="GO" id="GO:0004533">
    <property type="term" value="F:exoribonuclease H activity"/>
    <property type="evidence" value="ECO:0007669"/>
    <property type="project" value="UniProtKB-EC"/>
</dbReference>
<dbReference type="GO" id="GO:0035613">
    <property type="term" value="F:RNA stem-loop binding"/>
    <property type="evidence" value="ECO:0007669"/>
    <property type="project" value="TreeGrafter"/>
</dbReference>
<dbReference type="GO" id="GO:0003964">
    <property type="term" value="F:RNA-directed DNA polymerase activity"/>
    <property type="evidence" value="ECO:0007669"/>
    <property type="project" value="UniProtKB-KW"/>
</dbReference>
<dbReference type="GO" id="GO:0004523">
    <property type="term" value="F:RNA-DNA hybrid ribonuclease activity"/>
    <property type="evidence" value="ECO:0007669"/>
    <property type="project" value="InterPro"/>
</dbReference>
<dbReference type="GO" id="GO:0008270">
    <property type="term" value="F:zinc ion binding"/>
    <property type="evidence" value="ECO:0007669"/>
    <property type="project" value="UniProtKB-KW"/>
</dbReference>
<dbReference type="GO" id="GO:0015074">
    <property type="term" value="P:DNA integration"/>
    <property type="evidence" value="ECO:0007669"/>
    <property type="project" value="UniProtKB-KW"/>
</dbReference>
<dbReference type="GO" id="GO:0006310">
    <property type="term" value="P:DNA recombination"/>
    <property type="evidence" value="ECO:0007669"/>
    <property type="project" value="UniProtKB-KW"/>
</dbReference>
<dbReference type="GO" id="GO:0075713">
    <property type="term" value="P:establishment of integrated proviral latency"/>
    <property type="evidence" value="ECO:0007669"/>
    <property type="project" value="UniProtKB-KW"/>
</dbReference>
<dbReference type="GO" id="GO:0009117">
    <property type="term" value="P:nucleotide metabolic process"/>
    <property type="evidence" value="ECO:0007669"/>
    <property type="project" value="UniProtKB-KW"/>
</dbReference>
<dbReference type="GO" id="GO:0006508">
    <property type="term" value="P:proteolysis"/>
    <property type="evidence" value="ECO:0007669"/>
    <property type="project" value="UniProtKB-KW"/>
</dbReference>
<dbReference type="GO" id="GO:0046718">
    <property type="term" value="P:symbiont entry into host cell"/>
    <property type="evidence" value="ECO:0007669"/>
    <property type="project" value="UniProtKB-KW"/>
</dbReference>
<dbReference type="GO" id="GO:0044826">
    <property type="term" value="P:viral genome integration into host DNA"/>
    <property type="evidence" value="ECO:0007669"/>
    <property type="project" value="UniProtKB-KW"/>
</dbReference>
<dbReference type="CDD" id="cd07557">
    <property type="entry name" value="trimeric_dUTPase"/>
    <property type="match status" value="1"/>
</dbReference>
<dbReference type="Gene3D" id="1.10.10.200">
    <property type="match status" value="1"/>
</dbReference>
<dbReference type="Gene3D" id="2.70.40.10">
    <property type="match status" value="1"/>
</dbReference>
<dbReference type="Gene3D" id="3.30.70.270">
    <property type="match status" value="3"/>
</dbReference>
<dbReference type="Gene3D" id="2.40.70.10">
    <property type="entry name" value="Acid Proteases"/>
    <property type="match status" value="1"/>
</dbReference>
<dbReference type="Gene3D" id="3.10.10.10">
    <property type="entry name" value="HIV Type 1 Reverse Transcriptase, subunit A, domain 1"/>
    <property type="match status" value="1"/>
</dbReference>
<dbReference type="Gene3D" id="2.30.30.10">
    <property type="entry name" value="Integrase, C-terminal domain superfamily, retroviral"/>
    <property type="match status" value="1"/>
</dbReference>
<dbReference type="Gene3D" id="3.30.420.10">
    <property type="entry name" value="Ribonuclease H-like superfamily/Ribonuclease H"/>
    <property type="match status" value="2"/>
</dbReference>
<dbReference type="InterPro" id="IPR001969">
    <property type="entry name" value="Aspartic_peptidase_AS"/>
</dbReference>
<dbReference type="InterPro" id="IPR043502">
    <property type="entry name" value="DNA/RNA_pol_sf"/>
</dbReference>
<dbReference type="InterPro" id="IPR029054">
    <property type="entry name" value="dUTPase-like"/>
</dbReference>
<dbReference type="InterPro" id="IPR036157">
    <property type="entry name" value="dUTPase-like_sf"/>
</dbReference>
<dbReference type="InterPro" id="IPR033704">
    <property type="entry name" value="dUTPase_trimeric"/>
</dbReference>
<dbReference type="InterPro" id="IPR017856">
    <property type="entry name" value="Integrase-like_N"/>
</dbReference>
<dbReference type="InterPro" id="IPR036862">
    <property type="entry name" value="Integrase_C_dom_sf_retrovir"/>
</dbReference>
<dbReference type="InterPro" id="IPR001037">
    <property type="entry name" value="Integrase_C_retrovir"/>
</dbReference>
<dbReference type="InterPro" id="IPR001584">
    <property type="entry name" value="Integrase_cat-core"/>
</dbReference>
<dbReference type="InterPro" id="IPR003308">
    <property type="entry name" value="Integrase_Zn-bd_dom_N"/>
</dbReference>
<dbReference type="InterPro" id="IPR001995">
    <property type="entry name" value="Peptidase_A2_cat"/>
</dbReference>
<dbReference type="InterPro" id="IPR021109">
    <property type="entry name" value="Peptidase_aspartic_dom_sf"/>
</dbReference>
<dbReference type="InterPro" id="IPR018061">
    <property type="entry name" value="Retropepsins"/>
</dbReference>
<dbReference type="InterPro" id="IPR043128">
    <property type="entry name" value="Rev_trsase/Diguanyl_cyclase"/>
</dbReference>
<dbReference type="InterPro" id="IPR012337">
    <property type="entry name" value="RNaseH-like_sf"/>
</dbReference>
<dbReference type="InterPro" id="IPR002156">
    <property type="entry name" value="RNaseH_domain"/>
</dbReference>
<dbReference type="InterPro" id="IPR036397">
    <property type="entry name" value="RNaseH_sf"/>
</dbReference>
<dbReference type="InterPro" id="IPR000477">
    <property type="entry name" value="RT_dom"/>
</dbReference>
<dbReference type="InterPro" id="IPR010659">
    <property type="entry name" value="RVT_connect"/>
</dbReference>
<dbReference type="PANTHER" id="PTHR41694">
    <property type="entry name" value="ENDOGENOUS RETROVIRUS GROUP K MEMBER POL PROTEIN"/>
    <property type="match status" value="1"/>
</dbReference>
<dbReference type="PANTHER" id="PTHR41694:SF3">
    <property type="entry name" value="RNA-DIRECTED DNA POLYMERASE-RELATED"/>
    <property type="match status" value="1"/>
</dbReference>
<dbReference type="Pfam" id="PF00692">
    <property type="entry name" value="dUTPase"/>
    <property type="match status" value="1"/>
</dbReference>
<dbReference type="Pfam" id="PF02022">
    <property type="entry name" value="Integrase_Zn"/>
    <property type="match status" value="1"/>
</dbReference>
<dbReference type="Pfam" id="PF00075">
    <property type="entry name" value="RNase_H"/>
    <property type="match status" value="1"/>
</dbReference>
<dbReference type="Pfam" id="PF00665">
    <property type="entry name" value="rve"/>
    <property type="match status" value="1"/>
</dbReference>
<dbReference type="Pfam" id="PF00077">
    <property type="entry name" value="RVP"/>
    <property type="match status" value="1"/>
</dbReference>
<dbReference type="Pfam" id="PF00078">
    <property type="entry name" value="RVT_1"/>
    <property type="match status" value="1"/>
</dbReference>
<dbReference type="Pfam" id="PF06815">
    <property type="entry name" value="RVT_connect"/>
    <property type="match status" value="1"/>
</dbReference>
<dbReference type="SUPFAM" id="SSF50630">
    <property type="entry name" value="Acid proteases"/>
    <property type="match status" value="1"/>
</dbReference>
<dbReference type="SUPFAM" id="SSF50122">
    <property type="entry name" value="DNA-binding domain of retroviral integrase"/>
    <property type="match status" value="1"/>
</dbReference>
<dbReference type="SUPFAM" id="SSF56672">
    <property type="entry name" value="DNA/RNA polymerases"/>
    <property type="match status" value="1"/>
</dbReference>
<dbReference type="SUPFAM" id="SSF51283">
    <property type="entry name" value="dUTPase-like"/>
    <property type="match status" value="1"/>
</dbReference>
<dbReference type="SUPFAM" id="SSF46919">
    <property type="entry name" value="N-terminal Zn binding domain of HIV integrase"/>
    <property type="match status" value="1"/>
</dbReference>
<dbReference type="SUPFAM" id="SSF53098">
    <property type="entry name" value="Ribonuclease H-like"/>
    <property type="match status" value="2"/>
</dbReference>
<dbReference type="PROSITE" id="PS50175">
    <property type="entry name" value="ASP_PROT_RETROV"/>
    <property type="match status" value="1"/>
</dbReference>
<dbReference type="PROSITE" id="PS00141">
    <property type="entry name" value="ASP_PROTEASE"/>
    <property type="match status" value="1"/>
</dbReference>
<dbReference type="PROSITE" id="PS50994">
    <property type="entry name" value="INTEGRASE"/>
    <property type="match status" value="1"/>
</dbReference>
<dbReference type="PROSITE" id="PS51027">
    <property type="entry name" value="INTEGRASE_DBD"/>
    <property type="match status" value="1"/>
</dbReference>
<dbReference type="PROSITE" id="PS50879">
    <property type="entry name" value="RNASE_H_1"/>
    <property type="match status" value="1"/>
</dbReference>
<dbReference type="PROSITE" id="PS50878">
    <property type="entry name" value="RT_POL"/>
    <property type="match status" value="1"/>
</dbReference>
<dbReference type="PROSITE" id="PS50876">
    <property type="entry name" value="ZF_INTEGRASE"/>
    <property type="match status" value="1"/>
</dbReference>
<comment type="function">
    <text>During replicative cycle of retroviruses, the reverse-transcribed viral DNA is integrated into the host chromosome by the viral integrase enzyme. RNase H activity is associated with the reverse transcriptase.</text>
</comment>
<comment type="catalytic activity">
    <reaction>
        <text>Endohydrolysis of RNA in RNA/DNA hybrids. Three different cleavage modes: 1. sequence-specific internal cleavage of RNA. Human immunodeficiency virus type 1 and Moloney murine leukemia virus enzymes prefer to cleave the RNA strand one nucleotide away from the RNA-DNA junction. 2. RNA 5'-end directed cleavage 13-19 nucleotides from the RNA end. 3. DNA 3'-end directed cleavage 15-20 nucleotides away from the primer terminus.</text>
        <dbReference type="EC" id="3.1.26.13"/>
    </reaction>
</comment>
<comment type="catalytic activity">
    <reaction>
        <text>3'-end directed exonucleolytic cleavage of viral RNA-DNA hybrid.</text>
        <dbReference type="EC" id="3.1.13.2"/>
    </reaction>
</comment>
<comment type="catalytic activity">
    <reaction>
        <text>dUTP + H2O = dUMP + diphosphate + H(+)</text>
        <dbReference type="Rhea" id="RHEA:10248"/>
        <dbReference type="ChEBI" id="CHEBI:15377"/>
        <dbReference type="ChEBI" id="CHEBI:15378"/>
        <dbReference type="ChEBI" id="CHEBI:33019"/>
        <dbReference type="ChEBI" id="CHEBI:61555"/>
        <dbReference type="ChEBI" id="CHEBI:246422"/>
        <dbReference type="EC" id="3.6.1.23"/>
    </reaction>
</comment>
<comment type="catalytic activity">
    <reaction evidence="4">
        <text>DNA(n) + a 2'-deoxyribonucleoside 5'-triphosphate = DNA(n+1) + diphosphate</text>
        <dbReference type="Rhea" id="RHEA:22508"/>
        <dbReference type="Rhea" id="RHEA-COMP:17339"/>
        <dbReference type="Rhea" id="RHEA-COMP:17340"/>
        <dbReference type="ChEBI" id="CHEBI:33019"/>
        <dbReference type="ChEBI" id="CHEBI:61560"/>
        <dbReference type="ChEBI" id="CHEBI:173112"/>
        <dbReference type="EC" id="2.7.7.49"/>
    </reaction>
</comment>
<comment type="PTM">
    <text>Cleavage sites that yield the mature proteins remain to be determined.</text>
</comment>
<comment type="similarity">
    <text evidence="10">Belongs to the retroviral Pol polyprotein family.</text>
</comment>
<evidence type="ECO:0000250" key="1"/>
<evidence type="ECO:0000250" key="2">
    <source>
        <dbReference type="UniProtKB" id="P04585"/>
    </source>
</evidence>
<evidence type="ECO:0000255" key="3">
    <source>
        <dbReference type="PROSITE-ProRule" id="PRU00275"/>
    </source>
</evidence>
<evidence type="ECO:0000255" key="4">
    <source>
        <dbReference type="PROSITE-ProRule" id="PRU00405"/>
    </source>
</evidence>
<evidence type="ECO:0000255" key="5">
    <source>
        <dbReference type="PROSITE-ProRule" id="PRU00408"/>
    </source>
</evidence>
<evidence type="ECO:0000255" key="6">
    <source>
        <dbReference type="PROSITE-ProRule" id="PRU00450"/>
    </source>
</evidence>
<evidence type="ECO:0000255" key="7">
    <source>
        <dbReference type="PROSITE-ProRule" id="PRU00457"/>
    </source>
</evidence>
<evidence type="ECO:0000255" key="8">
    <source>
        <dbReference type="PROSITE-ProRule" id="PRU00506"/>
    </source>
</evidence>
<evidence type="ECO:0000255" key="9">
    <source>
        <dbReference type="PROSITE-ProRule" id="PRU10094"/>
    </source>
</evidence>
<evidence type="ECO:0000305" key="10"/>
<accession>P16901</accession>
<name>POL_OMVVS</name>
<proteinExistence type="inferred from homology"/>
<sequence length="1086" mass="124515">SNITAGKQQEGATCGAVRAPYVVTEAPPKIDIKVGTNWKKVLVDTGADRTIVRYHDNSGIPTGRIKLQGIGGIIEGEKWDKVVIQYKEKRIEGTIVVLPSSPVEVLGRDNMAKLDIGIIMANLEEKKIPITQVKLKEGCKGPHIAQWPLTQEKLEGLKEIVDKLEKEGKVGRAPPHWTCNTPIFCIKKKSGKWRMLIDFRELNKQTEDLAEAQLGLPHPGGLQKKKHVTILDIGDAYFTIPLYEPYRPYTCFTMLSPNNLGPCTRYYWKVLPQGWKLSPSVYQFTMQEILRDWIAKHPMIQFGIYMDDIYIGSDLDIMKHREIVEELASYIAQYGFMLPEEKRQEGYPAKWLGFELHPEKWRFQKHTLPEIKEGTITLNKLQKLVGDLVWRQSLIGKSIPNILKLMEGDRALQSERRIELRHVKEWEECRRKLAEMEGNYYDEEKDVYGQIDWGDKAIEYIVFQERGKPLWVNVVHNIKNLSQSQQIIKAAQKLTQEVIIRIGKIPWILLPGKEEDWILELQIGNITWMPSFWSCYRGSIRWKKRNVITEVVEGPTYYTDGGKKNGKGSLGFIASTGVKFRKHEEGTNQQLELRAIEEACKQGPEKMNIVTDSRYAYEFMRRNWDEEVIKNPIQARIMKLVHDKEQIGVHWVPGHKGIPQNEEIDKYISEIFLAREGSGILPKRAEDAGYDLICPQEVCIPAGQVRKIPINLRINLKEDQWAMVGTKSSFASKGVFVQGGIIDSGYQGIIQVVVYNSNDKEVIIPQGRKFAQLILMPLIHEDLEAWGETRRTERGNQGFGSTGAYWIENIPLAEEDHSKWHQDAGSLHLDFGIPRTAAEDIVQQCEVCQENKMPSTIRGSNRRGIDHWQVDYTHYEDKIILVWVETNSGLIYAERVKGETGQEFRIMTIRWYGLFAPKSLQSDNGPAFVAEPTQLLMKYLGITHTTGIPWNPQSQALVERTHQTLKNTIEKFVSMFASFDSAIAAALITLNIKRKGGLGTSPMDIFIFNKEQQRIQQQSTRNQSKFRFCYYRVRKRGHPGEWLGPTQVLWEGEGAIVIKDKNLEKYLVIAKKDVKFIPQPKEIQTE</sequence>
<organismHost>
    <name type="scientific">Ovis aries</name>
    <name type="common">Sheep</name>
    <dbReference type="NCBI Taxonomy" id="9940"/>
</organismHost>
<protein>
    <recommendedName>
        <fullName>Pol polyprotein</fullName>
    </recommendedName>
    <component>
        <recommendedName>
            <fullName>Protease</fullName>
            <ecNumber>3.4.23.-</ecNumber>
        </recommendedName>
        <alternativeName>
            <fullName>Retropepsin</fullName>
        </alternativeName>
    </component>
    <component>
        <recommendedName>
            <fullName>Reverse transcriptase/ribonuclease H</fullName>
            <shortName>RT</shortName>
            <ecNumber>2.7.7.49</ecNumber>
            <ecNumber>3.1.26.13</ecNumber>
        </recommendedName>
        <alternativeName>
            <fullName>Exoribonuclease H</fullName>
            <ecNumber>3.1.13.2</ecNumber>
        </alternativeName>
    </component>
    <component>
        <recommendedName>
            <fullName>Deoxyuridine 5'-triphosphate nucleotidohydrolase</fullName>
            <shortName>dUTPase</shortName>
            <ecNumber>3.6.1.23</ecNumber>
        </recommendedName>
    </component>
    <component>
        <recommendedName>
            <fullName>Integrase</fullName>
            <shortName>IN</shortName>
            <ecNumber evidence="2">2.7.7.-</ecNumber>
            <ecNumber evidence="2">3.1.-.-</ecNumber>
        </recommendedName>
    </component>
</protein>
<feature type="chain" id="PRO_0000038853" description="Protease" evidence="1">
    <location>
        <begin position="1"/>
        <end position="120"/>
    </location>
</feature>
<feature type="chain" id="PRO_0000038854" description="Reverse transcriptase/ribonuclease H" evidence="1">
    <location>
        <begin position="121"/>
        <end position="671"/>
    </location>
</feature>
<feature type="chain" id="PRO_0000038855" description="Deoxyuridine 5'-triphosphate nucleotidohydrolase" evidence="1">
    <location>
        <begin position="672"/>
        <end position="805"/>
    </location>
</feature>
<feature type="chain" id="PRO_0000038856" description="Integrase" evidence="1">
    <location>
        <begin position="806"/>
        <end position="1086"/>
    </location>
</feature>
<feature type="domain" description="Peptidase A2" evidence="3">
    <location>
        <begin position="39"/>
        <end position="110"/>
    </location>
</feature>
<feature type="domain" description="Reverse transcriptase" evidence="4">
    <location>
        <begin position="167"/>
        <end position="356"/>
    </location>
</feature>
<feature type="domain" description="RNase H type-1" evidence="5">
    <location>
        <begin position="551"/>
        <end position="673"/>
    </location>
</feature>
<feature type="domain" description="Integrase catalytic" evidence="7">
    <location>
        <begin position="850"/>
        <end position="1010"/>
    </location>
</feature>
<feature type="zinc finger region" description="Integrase-type" evidence="6">
    <location>
        <begin position="808"/>
        <end position="849"/>
    </location>
</feature>
<feature type="DNA-binding region" description="Integrase-type" evidence="8">
    <location>
        <begin position="1027"/>
        <end position="1079"/>
    </location>
</feature>
<feature type="active site" evidence="9">
    <location>
        <position position="44"/>
    </location>
</feature>
<feature type="binding site" evidence="6">
    <location>
        <position position="817"/>
    </location>
    <ligand>
        <name>Zn(2+)</name>
        <dbReference type="ChEBI" id="CHEBI:29105"/>
    </ligand>
</feature>
<feature type="binding site" evidence="6">
    <location>
        <position position="821"/>
    </location>
    <ligand>
        <name>Zn(2+)</name>
        <dbReference type="ChEBI" id="CHEBI:29105"/>
    </ligand>
</feature>
<feature type="binding site" evidence="6">
    <location>
        <position position="845"/>
    </location>
    <ligand>
        <name>Zn(2+)</name>
        <dbReference type="ChEBI" id="CHEBI:29105"/>
    </ligand>
</feature>
<feature type="binding site" evidence="6">
    <location>
        <position position="848"/>
    </location>
    <ligand>
        <name>Zn(2+)</name>
        <dbReference type="ChEBI" id="CHEBI:29105"/>
    </ligand>
</feature>
<organism>
    <name type="scientific">Ovine maedi visna related virus (strain South Africa)</name>
    <name type="common">SA-OMVV</name>
    <name type="synonym">Ovine lentivirus</name>
    <dbReference type="NCBI Taxonomy" id="11664"/>
    <lineage>
        <taxon>Viruses</taxon>
        <taxon>Riboviria</taxon>
        <taxon>Pararnavirae</taxon>
        <taxon>Artverviricota</taxon>
        <taxon>Revtraviricetes</taxon>
        <taxon>Ortervirales</taxon>
        <taxon>Retroviridae</taxon>
        <taxon>Orthoretrovirinae</taxon>
        <taxon>Lentivirus</taxon>
        <taxon>Visna-maedi virus</taxon>
    </lineage>
</organism>